<name>NLE1_YEAST</name>
<reference key="1">
    <citation type="journal article" date="1992" name="Nature">
        <title>The complete DNA sequence of yeast chromosome III.</title>
        <authorList>
            <person name="Oliver S.G."/>
            <person name="van der Aart Q.J.M."/>
            <person name="Agostoni-Carbone M.L."/>
            <person name="Aigle M."/>
            <person name="Alberghina L."/>
            <person name="Alexandraki D."/>
            <person name="Antoine G."/>
            <person name="Anwar R."/>
            <person name="Ballesta J.P.G."/>
            <person name="Benit P."/>
            <person name="Berben G."/>
            <person name="Bergantino E."/>
            <person name="Biteau N."/>
            <person name="Bolle P.-A."/>
            <person name="Bolotin-Fukuhara M."/>
            <person name="Brown A."/>
            <person name="Brown A.J.P."/>
            <person name="Buhler J.-M."/>
            <person name="Carcano C."/>
            <person name="Carignani G."/>
            <person name="Cederberg H."/>
            <person name="Chanet R."/>
            <person name="Contreras R."/>
            <person name="Crouzet M."/>
            <person name="Daignan-Fornier B."/>
            <person name="Defoor E."/>
            <person name="Delgado M.D."/>
            <person name="Demolder J."/>
            <person name="Doira C."/>
            <person name="Dubois E."/>
            <person name="Dujon B."/>
            <person name="Duesterhoeft A."/>
            <person name="Erdmann D."/>
            <person name="Esteban M."/>
            <person name="Fabre F."/>
            <person name="Fairhead C."/>
            <person name="Faye G."/>
            <person name="Feldmann H."/>
            <person name="Fiers W."/>
            <person name="Francingues-Gaillard M.-C."/>
            <person name="Franco L."/>
            <person name="Frontali L."/>
            <person name="Fukuhara H."/>
            <person name="Fuller L.J."/>
            <person name="Galland P."/>
            <person name="Gent M.E."/>
            <person name="Gigot D."/>
            <person name="Gilliquet V."/>
            <person name="Glansdorff N."/>
            <person name="Goffeau A."/>
            <person name="Grenson M."/>
            <person name="Grisanti P."/>
            <person name="Grivell L.A."/>
            <person name="de Haan M."/>
            <person name="Haasemann M."/>
            <person name="Hatat D."/>
            <person name="Hoenicka J."/>
            <person name="Hegemann J.H."/>
            <person name="Herbert C.J."/>
            <person name="Hilger F."/>
            <person name="Hohmann S."/>
            <person name="Hollenberg C.P."/>
            <person name="Huse K."/>
            <person name="Iborra F."/>
            <person name="Indge K.J."/>
            <person name="Isono K."/>
            <person name="Jacq C."/>
            <person name="Jacquet M."/>
            <person name="James C.M."/>
            <person name="Jauniaux J.-C."/>
            <person name="Jia Y."/>
            <person name="Jimenez A."/>
            <person name="Kelly A."/>
            <person name="Kleinhans U."/>
            <person name="Kreisl P."/>
            <person name="Lanfranchi G."/>
            <person name="Lewis C."/>
            <person name="van der Linden C.G."/>
            <person name="Lucchini G."/>
            <person name="Lutzenkirchen K."/>
            <person name="Maat M.J."/>
            <person name="Mallet L."/>
            <person name="Mannhaupt G."/>
            <person name="Martegani E."/>
            <person name="Mathieu A."/>
            <person name="Maurer C.T.C."/>
            <person name="McConnell D."/>
            <person name="McKee R.A."/>
            <person name="Messenguy F."/>
            <person name="Mewes H.-W."/>
            <person name="Molemans F."/>
            <person name="Montague M.A."/>
            <person name="Muzi Falconi M."/>
            <person name="Navas L."/>
            <person name="Newlon C.S."/>
            <person name="Noone D."/>
            <person name="Pallier C."/>
            <person name="Panzeri L."/>
            <person name="Pearson B.M."/>
            <person name="Perea J."/>
            <person name="Philippsen P."/>
            <person name="Pierard A."/>
            <person name="Planta R.J."/>
            <person name="Plevani P."/>
            <person name="Poetsch B."/>
            <person name="Pohl F.M."/>
            <person name="Purnelle B."/>
            <person name="Ramezani Rad M."/>
            <person name="Rasmussen S.W."/>
            <person name="Raynal A."/>
            <person name="Remacha M.A."/>
            <person name="Richterich P."/>
            <person name="Roberts A.B."/>
            <person name="Rodriguez F."/>
            <person name="Sanz E."/>
            <person name="Schaaff-Gerstenschlaeger I."/>
            <person name="Scherens B."/>
            <person name="Schweitzer B."/>
            <person name="Shu Y."/>
            <person name="Skala J."/>
            <person name="Slonimski P.P."/>
            <person name="Sor F."/>
            <person name="Soustelle C."/>
            <person name="Spiegelberg R."/>
            <person name="Stateva L.I."/>
            <person name="Steensma H.Y."/>
            <person name="Steiner S."/>
            <person name="Thierry A."/>
            <person name="Thireos G."/>
            <person name="Tzermia M."/>
            <person name="Urrestarazu L.A."/>
            <person name="Valle G."/>
            <person name="Vetter I."/>
            <person name="van Vliet-Reedijk J.C."/>
            <person name="Voet M."/>
            <person name="Volckaert G."/>
            <person name="Vreken P."/>
            <person name="Wang H."/>
            <person name="Warmington J.R."/>
            <person name="von Wettstein D."/>
            <person name="Wicksteed B.L."/>
            <person name="Wilson C."/>
            <person name="Wurst H."/>
            <person name="Xu G."/>
            <person name="Yoshikawa A."/>
            <person name="Zimmermann F.K."/>
            <person name="Sgouros J.G."/>
        </authorList>
    </citation>
    <scope>NUCLEOTIDE SEQUENCE [LARGE SCALE GENOMIC DNA]</scope>
    <source>
        <strain>ATCC 204508 / S288c</strain>
    </source>
</reference>
<reference key="2">
    <citation type="submission" date="1992-12" db="EMBL/GenBank/DDBJ databases">
        <authorList>
            <person name="Jimenez A."/>
        </authorList>
    </citation>
    <scope>SEQUENCE REVISION</scope>
</reference>
<reference key="3">
    <citation type="submission" date="2001-06" db="EMBL/GenBank/DDBJ databases">
        <authorList>
            <person name="Valles G."/>
            <person name="Volckaerts G."/>
        </authorList>
    </citation>
    <scope>SEQUENCE REVISION TO 444</scope>
</reference>
<reference key="4">
    <citation type="journal article" date="2014" name="G3 (Bethesda)">
        <title>The reference genome sequence of Saccharomyces cerevisiae: Then and now.</title>
        <authorList>
            <person name="Engel S.R."/>
            <person name="Dietrich F.S."/>
            <person name="Fisk D.G."/>
            <person name="Binkley G."/>
            <person name="Balakrishnan R."/>
            <person name="Costanzo M.C."/>
            <person name="Dwight S.S."/>
            <person name="Hitz B.C."/>
            <person name="Karra K."/>
            <person name="Nash R.S."/>
            <person name="Weng S."/>
            <person name="Wong E.D."/>
            <person name="Lloyd P."/>
            <person name="Skrzypek M.S."/>
            <person name="Miyasato S.R."/>
            <person name="Simison M."/>
            <person name="Cherry J.M."/>
        </authorList>
    </citation>
    <scope>GENOME REANNOTATION</scope>
    <source>
        <strain>ATCC 204508 / S288c</strain>
    </source>
</reference>
<reference key="5">
    <citation type="journal article" date="2007" name="Genome Res.">
        <title>Approaching a complete repository of sequence-verified protein-encoding clones for Saccharomyces cerevisiae.</title>
        <authorList>
            <person name="Hu Y."/>
            <person name="Rolfs A."/>
            <person name="Bhullar B."/>
            <person name="Murthy T.V.S."/>
            <person name="Zhu C."/>
            <person name="Berger M.F."/>
            <person name="Camargo A.A."/>
            <person name="Kelley F."/>
            <person name="McCarron S."/>
            <person name="Jepson D."/>
            <person name="Richardson A."/>
            <person name="Raphael J."/>
            <person name="Moreira D."/>
            <person name="Taycher E."/>
            <person name="Zuo D."/>
            <person name="Mohr S."/>
            <person name="Kane M.F."/>
            <person name="Williamson J."/>
            <person name="Simpson A.J.G."/>
            <person name="Bulyk M.L."/>
            <person name="Harlow E."/>
            <person name="Marsischky G."/>
            <person name="Kolodner R.D."/>
            <person name="LaBaer J."/>
        </authorList>
    </citation>
    <scope>NUCLEOTIDE SEQUENCE [GENOMIC DNA]</scope>
    <source>
        <strain>ATCC 204508 / S288c</strain>
    </source>
</reference>
<reference key="6">
    <citation type="journal article" date="2005" name="Nucleic Acids Res.">
        <title>The essential WD-repeat protein Rsa4p is required for rRNA processing and intra-nuclear transport of 60S ribosomal subunits.</title>
        <authorList>
            <person name="de la Cruz J."/>
            <person name="Sanz-Martinez E."/>
            <person name="Remacha M."/>
        </authorList>
    </citation>
    <scope>FUNCTION</scope>
    <scope>SUBCELLULAR LOCATION</scope>
</reference>
<reference key="7">
    <citation type="journal article" date="2006" name="Genes Dev.">
        <title>Systematic identification and functional screens of uncharacterized proteins associated with eukaryotic ribosomal complexes.</title>
        <authorList>
            <person name="Fleischer T.C."/>
            <person name="Weaver C.M."/>
            <person name="McAfee K.J."/>
            <person name="Jennings J.L."/>
            <person name="Link A.J."/>
        </authorList>
    </citation>
    <scope>COPURIFICATION WITH RIBOSOMAL COMPLEXES</scope>
    <scope>IDENTIFICATION BY MASS SPECTROMETRY</scope>
</reference>
<reference key="8">
    <citation type="journal article" date="2007" name="J. Proteome Res.">
        <title>Large-scale phosphorylation analysis of alpha-factor-arrested Saccharomyces cerevisiae.</title>
        <authorList>
            <person name="Li X."/>
            <person name="Gerber S.A."/>
            <person name="Rudner A.D."/>
            <person name="Beausoleil S.A."/>
            <person name="Haas W."/>
            <person name="Villen J."/>
            <person name="Elias J.E."/>
            <person name="Gygi S.P."/>
        </authorList>
    </citation>
    <scope>IDENTIFICATION BY MASS SPECTROMETRY [LARGE SCALE ANALYSIS]</scope>
    <source>
        <strain>ADR376</strain>
    </source>
</reference>
<reference key="9">
    <citation type="journal article" date="2008" name="Mol. Cell. Proteomics">
        <title>A multidimensional chromatography technology for in-depth phosphoproteome analysis.</title>
        <authorList>
            <person name="Albuquerque C.P."/>
            <person name="Smolka M.B."/>
            <person name="Payne S.H."/>
            <person name="Bafna V."/>
            <person name="Eng J."/>
            <person name="Zhou H."/>
        </authorList>
    </citation>
    <scope>IDENTIFICATION BY MASS SPECTROMETRY [LARGE SCALE ANALYSIS]</scope>
</reference>
<reference key="10">
    <citation type="journal article" date="2008" name="Nucleic Acids Res.">
        <title>60S ribosomal subunit assembly dynamics defined by semi-quantitative mass spectrometry of purified complexes.</title>
        <authorList>
            <person name="Lebreton A."/>
            <person name="Rousselle J.C."/>
            <person name="Lenormand P."/>
            <person name="Namane A."/>
            <person name="Jacquier A."/>
            <person name="Fromont-Racine M."/>
            <person name="Saveanu C."/>
        </authorList>
    </citation>
    <scope>ASSOCIATION WITH THE PRE-60S PARTICLE</scope>
</reference>
<reference key="11">
    <citation type="journal article" date="2009" name="Cell">
        <title>Mechanochemical removal of ribosome biogenesis factors from nascent 60S ribosomal subunits.</title>
        <authorList>
            <person name="Ulbrich C."/>
            <person name="Diepholz M."/>
            <person name="Bassler J."/>
            <person name="Kressler D."/>
            <person name="Pertschy B."/>
            <person name="Galani K."/>
            <person name="Bottcher B."/>
            <person name="Hurt E."/>
        </authorList>
    </citation>
    <scope>FUNCTION</scope>
    <scope>ASSOCIATION WITH THE PRE-60S PARTICLE</scope>
    <scope>INTERACTION WITH MDN1</scope>
    <scope>MUTAGENESIS OF GLU-114</scope>
</reference>
<reference key="12">
    <citation type="journal article" date="2010" name="Mol. Cell">
        <title>The AAA-ATPase Rea1 drives removal of biogenesis factors during multiple stages of 60S ribosome assembly.</title>
        <authorList>
            <person name="Bassler J."/>
            <person name="Kallas M."/>
            <person name="Pertschy B."/>
            <person name="Ulbrich C."/>
            <person name="Thoms M."/>
            <person name="Hurt E."/>
        </authorList>
    </citation>
    <scope>FUNCTION</scope>
    <scope>INTERACTION WITH MDN1</scope>
</reference>
<reference key="13">
    <citation type="journal article" date="2014" name="J. Cell Biol.">
        <title>A network of assembly factors is involved in remodeling rRNA elements during preribosome maturation.</title>
        <authorList>
            <person name="Bassler J."/>
            <person name="Paternoga H."/>
            <person name="Holdermann I."/>
            <person name="Thoms M."/>
            <person name="Granneman S."/>
            <person name="Barrio-Garcia C."/>
            <person name="Nyarko A."/>
            <person name="Lee W."/>
            <person name="Stier G."/>
            <person name="Clark S.A."/>
            <person name="Schraivogel D."/>
            <person name="Kallas M."/>
            <person name="Beckmann R."/>
            <person name="Tollervey D."/>
            <person name="Barbar E."/>
            <person name="Sinning I."/>
            <person name="Hurt E."/>
        </authorList>
    </citation>
    <scope>X-RAY CRYSTALLOGRAPHY (2.80 ANGSTROMS)</scope>
    <scope>INTERACTION WITH NSA2</scope>
</reference>
<reference key="14">
    <citation type="journal article" date="2015" name="J. Cell Biol.">
        <authorList>
            <person name="Bassler J."/>
            <person name="Paternoga H."/>
            <person name="Holdermann I."/>
            <person name="Thoms M."/>
            <person name="Granneman S."/>
            <person name="Barrio-Garcia C."/>
            <person name="Nyarko A."/>
            <person name="Lee W."/>
            <person name="Stier G."/>
            <person name="Clark S.A."/>
            <person name="Schraivogel D."/>
            <person name="Kallas M."/>
            <person name="Beckmann R."/>
            <person name="Tollervey D."/>
            <person name="Barbar E."/>
            <person name="Sinning I."/>
            <person name="Hurt E."/>
        </authorList>
    </citation>
    <scope>ERRATUM OF PUBMED:25404745</scope>
</reference>
<reference key="15">
    <citation type="journal article" date="2014" name="Nat. Commun.">
        <title>60S ribosome biogenesis requires rotation of the 5S ribonucleoprotein particle.</title>
        <authorList>
            <person name="Leidig C."/>
            <person name="Thoms M."/>
            <person name="Holdermann I."/>
            <person name="Bradatsch B."/>
            <person name="Berninghausen O."/>
            <person name="Bange G."/>
            <person name="Sinning I."/>
            <person name="Hurt E."/>
            <person name="Beckmann R."/>
        </authorList>
    </citation>
    <scope>STRUCTURE BY ELECTRON MICROSCOPY (8.70 ANGSTROMS)</scope>
</reference>
<reference key="16">
    <citation type="journal article" date="2016" name="Nat. Struct. Mol. Biol.">
        <title>Architecture of the Rix1-Rea1 checkpoint machinery during pre-60S-ribosome remodeling.</title>
        <authorList>
            <person name="Barrio-Garcia C."/>
            <person name="Thoms M."/>
            <person name="Flemming D."/>
            <person name="Kater L."/>
            <person name="Berninghausen O."/>
            <person name="Bassler J."/>
            <person name="Beckmann R."/>
            <person name="Hurt E."/>
        </authorList>
    </citation>
    <scope>STRUCTURE BY ELECTRON MICROSCOPY (9.50 ANGSTROMS)</scope>
</reference>
<reference key="17">
    <citation type="journal article" date="2016" name="Nature">
        <title>Diverse roles of assembly factors revealed by structures of late nuclear pre-60S ribosomes.</title>
        <authorList>
            <person name="Wu S."/>
            <person name="Tutuncuoglu B."/>
            <person name="Yan K."/>
            <person name="Brown H."/>
            <person name="Zhang Y."/>
            <person name="Tan D."/>
            <person name="Gamalinda M."/>
            <person name="Yuan Y."/>
            <person name="Li Z."/>
            <person name="Jakovljevic J."/>
            <person name="Ma C."/>
            <person name="Lei J."/>
            <person name="Dong M.Q."/>
            <person name="Woolford J.L. Jr."/>
            <person name="Gao N."/>
        </authorList>
    </citation>
    <scope>STRUCTURE BY ELECTRON MICROSCOPY (3.08 ANGSTROMS)</scope>
</reference>
<gene>
    <name evidence="9" type="primary">RSA4</name>
    <name evidence="13" type="ordered locus">YCR072C</name>
    <name type="ORF">YCR72C</name>
</gene>
<comment type="function">
    <text evidence="3 6 7">Involved in ribosome biogenesis. Required for processing and efficient intra-nuclear transport of pre-60S ribosomal subunits. Interacts with the AAA-ATPase Midasin (MDN1/REA1), which is essential for the ATP-dependent dissociation of a group of nonribosomal factors from the pre-60S particle.</text>
</comment>
<comment type="subunit">
    <text evidence="4 5 6 7 8">Associates with the pre-60S ribosomal particle (PubMed:16702403, PubMed:18658244, PubMed:19737519). Interacts (via WD repeats) with uL18 (RPL5) (PubMed:25404745). Interacts (via UBL domain) with MDN1 (via VWFA/MIDAS domain) (PubMed:19737519, PubMed:20542003). Interacts (via WD repeats) with NSA2 (PubMed:25404745).</text>
</comment>
<comment type="interaction">
    <interactant intactId="EBI-21980">
        <id>P25382</id>
    </interactant>
    <interactant intactId="EBI-10633">
        <id>Q12019</id>
        <label>MDN1</label>
    </interactant>
    <organismsDiffer>false</organismsDiffer>
    <experiments>6</experiments>
</comment>
<comment type="interaction">
    <interactant intactId="EBI-21980">
        <id>P25382</id>
    </interactant>
    <interactant intactId="EBI-22681">
        <id>P40078</id>
        <label>NSA2</label>
    </interactant>
    <organismsDiffer>false</organismsDiffer>
    <experiments>5</experiments>
</comment>
<comment type="subcellular location">
    <subcellularLocation>
        <location evidence="3">Nucleus</location>
        <location evidence="3">Nucleolus</location>
    </subcellularLocation>
</comment>
<comment type="similarity">
    <text evidence="11">Belongs to the NLE1/RSA4 family.</text>
</comment>
<organism>
    <name type="scientific">Saccharomyces cerevisiae (strain ATCC 204508 / S288c)</name>
    <name type="common">Baker's yeast</name>
    <dbReference type="NCBI Taxonomy" id="559292"/>
    <lineage>
        <taxon>Eukaryota</taxon>
        <taxon>Fungi</taxon>
        <taxon>Dikarya</taxon>
        <taxon>Ascomycota</taxon>
        <taxon>Saccharomycotina</taxon>
        <taxon>Saccharomycetes</taxon>
        <taxon>Saccharomycetales</taxon>
        <taxon>Saccharomycetaceae</taxon>
        <taxon>Saccharomyces</taxon>
    </lineage>
</organism>
<feature type="chain" id="PRO_0000051471" description="Ribosome assembly protein 4">
    <location>
        <begin position="1"/>
        <end position="515"/>
    </location>
</feature>
<feature type="repeat" description="WD 1" evidence="2">
    <location>
        <begin position="141"/>
        <end position="181"/>
    </location>
</feature>
<feature type="repeat" description="WD 2" evidence="2">
    <location>
        <begin position="184"/>
        <end position="223"/>
    </location>
</feature>
<feature type="repeat" description="WD 3" evidence="2">
    <location>
        <begin position="227"/>
        <end position="273"/>
    </location>
</feature>
<feature type="repeat" description="WD 4" evidence="2">
    <location>
        <begin position="276"/>
        <end position="314"/>
    </location>
</feature>
<feature type="repeat" description="WD 5" evidence="2">
    <location>
        <begin position="352"/>
        <end position="396"/>
    </location>
</feature>
<feature type="repeat" description="WD 6" evidence="2">
    <location>
        <begin position="400"/>
        <end position="439"/>
    </location>
</feature>
<feature type="repeat" description="WD 7" evidence="2">
    <location>
        <begin position="442"/>
        <end position="481"/>
    </location>
</feature>
<feature type="repeat" description="WD 8" evidence="2">
    <location>
        <begin position="484"/>
        <end position="515"/>
    </location>
</feature>
<feature type="region of interest" description="Interaction with MDN1" evidence="6">
    <location>
        <begin position="20"/>
        <end position="128"/>
    </location>
</feature>
<feature type="region of interest" description="Ubiquitin-like (UBL) domain" evidence="12">
    <location>
        <begin position="29"/>
        <end position="125"/>
    </location>
</feature>
<feature type="mutagenesis site" description="Impairs interaction with MDN1." evidence="6">
    <original>E</original>
    <variation>A</variation>
    <location>
        <position position="114"/>
    </location>
</feature>
<feature type="mutagenesis site" description="Impairs interaction with MDN1. Blocks progression of the nascent pre-60S subunit and subsequent export to the cytoplasm." evidence="6">
    <original>E</original>
    <variation>D</variation>
    <location>
        <position position="114"/>
    </location>
</feature>
<feature type="mutagenesis site" description="Impairs interaction with NSA2." evidence="8">
    <original>Y</original>
    <variation>E</variation>
    <location>
        <position position="448"/>
    </location>
</feature>
<feature type="strand" evidence="14">
    <location>
        <begin position="34"/>
        <end position="41"/>
    </location>
</feature>
<feature type="strand" evidence="14">
    <location>
        <begin position="48"/>
        <end position="50"/>
    </location>
</feature>
<feature type="helix" evidence="14">
    <location>
        <begin position="57"/>
        <end position="68"/>
    </location>
</feature>
<feature type="strand" evidence="14">
    <location>
        <begin position="77"/>
        <end position="80"/>
    </location>
</feature>
<feature type="helix" evidence="14">
    <location>
        <begin position="103"/>
        <end position="105"/>
    </location>
</feature>
<feature type="strand" evidence="14">
    <location>
        <begin position="117"/>
        <end position="126"/>
    </location>
</feature>
<feature type="strand" evidence="14">
    <location>
        <begin position="146"/>
        <end position="151"/>
    </location>
</feature>
<feature type="strand" evidence="14">
    <location>
        <begin position="156"/>
        <end position="163"/>
    </location>
</feature>
<feature type="strand" evidence="14">
    <location>
        <begin position="168"/>
        <end position="172"/>
    </location>
</feature>
<feature type="turn" evidence="14">
    <location>
        <begin position="173"/>
        <end position="176"/>
    </location>
</feature>
<feature type="strand" evidence="14">
    <location>
        <begin position="177"/>
        <end position="182"/>
    </location>
</feature>
<feature type="strand" evidence="14">
    <location>
        <begin position="189"/>
        <end position="194"/>
    </location>
</feature>
<feature type="strand" evidence="14">
    <location>
        <begin position="201"/>
        <end position="205"/>
    </location>
</feature>
<feature type="strand" evidence="14">
    <location>
        <begin position="210"/>
        <end position="213"/>
    </location>
</feature>
<feature type="turn" evidence="14">
    <location>
        <begin position="215"/>
        <end position="217"/>
    </location>
</feature>
<feature type="strand" evidence="14">
    <location>
        <begin position="232"/>
        <end position="237"/>
    </location>
</feature>
<feature type="helix" evidence="14">
    <location>
        <begin position="240"/>
        <end position="242"/>
    </location>
</feature>
<feature type="strand" evidence="14">
    <location>
        <begin position="251"/>
        <end position="255"/>
    </location>
</feature>
<feature type="strand" evidence="14">
    <location>
        <begin position="260"/>
        <end position="264"/>
    </location>
</feature>
<feature type="turn" evidence="14">
    <location>
        <begin position="265"/>
        <end position="268"/>
    </location>
</feature>
<feature type="strand" evidence="14">
    <location>
        <begin position="269"/>
        <end position="273"/>
    </location>
</feature>
<feature type="strand" evidence="14">
    <location>
        <begin position="281"/>
        <end position="286"/>
    </location>
</feature>
<feature type="strand" evidence="14">
    <location>
        <begin position="290"/>
        <end position="296"/>
    </location>
</feature>
<feature type="strand" evidence="14">
    <location>
        <begin position="301"/>
        <end position="305"/>
    </location>
</feature>
<feature type="helix" evidence="14">
    <location>
        <begin position="306"/>
        <end position="308"/>
    </location>
</feature>
<feature type="strand" evidence="14">
    <location>
        <begin position="312"/>
        <end position="316"/>
    </location>
</feature>
<feature type="strand" evidence="14">
    <location>
        <begin position="323"/>
        <end position="330"/>
    </location>
</feature>
<feature type="helix" evidence="14">
    <location>
        <begin position="331"/>
        <end position="336"/>
    </location>
</feature>
<feature type="helix" evidence="14">
    <location>
        <begin position="349"/>
        <end position="364"/>
    </location>
</feature>
<feature type="strand" evidence="14">
    <location>
        <begin position="365"/>
        <end position="370"/>
    </location>
</feature>
<feature type="strand" evidence="14">
    <location>
        <begin position="374"/>
        <end position="378"/>
    </location>
</feature>
<feature type="strand" evidence="14">
    <location>
        <begin position="383"/>
        <end position="386"/>
    </location>
</feature>
<feature type="turn" evidence="14">
    <location>
        <begin position="388"/>
        <end position="390"/>
    </location>
</feature>
<feature type="strand" evidence="14">
    <location>
        <begin position="395"/>
        <end position="398"/>
    </location>
</feature>
<feature type="strand" evidence="14">
    <location>
        <begin position="405"/>
        <end position="410"/>
    </location>
</feature>
<feature type="strand" evidence="14">
    <location>
        <begin position="414"/>
        <end position="421"/>
    </location>
</feature>
<feature type="strand" evidence="14">
    <location>
        <begin position="426"/>
        <end position="430"/>
    </location>
</feature>
<feature type="turn" evidence="14">
    <location>
        <begin position="431"/>
        <end position="433"/>
    </location>
</feature>
<feature type="strand" evidence="14">
    <location>
        <begin position="436"/>
        <end position="440"/>
    </location>
</feature>
<feature type="strand" evidence="14">
    <location>
        <begin position="447"/>
        <end position="452"/>
    </location>
</feature>
<feature type="strand" evidence="14">
    <location>
        <begin position="456"/>
        <end position="463"/>
    </location>
</feature>
<feature type="strand" evidence="14">
    <location>
        <begin position="466"/>
        <end position="472"/>
    </location>
</feature>
<feature type="turn" evidence="14">
    <location>
        <begin position="473"/>
        <end position="476"/>
    </location>
</feature>
<feature type="strand" evidence="14">
    <location>
        <begin position="477"/>
        <end position="483"/>
    </location>
</feature>
<feature type="strand" evidence="14">
    <location>
        <begin position="489"/>
        <end position="494"/>
    </location>
</feature>
<feature type="strand" evidence="14">
    <location>
        <begin position="500"/>
        <end position="505"/>
    </location>
</feature>
<feature type="strand" evidence="14">
    <location>
        <begin position="510"/>
        <end position="514"/>
    </location>
</feature>
<evidence type="ECO:0000250" key="1">
    <source>
        <dbReference type="UniProtKB" id="Q9VPR4"/>
    </source>
</evidence>
<evidence type="ECO:0000255" key="2"/>
<evidence type="ECO:0000269" key="3">
    <source>
    </source>
</evidence>
<evidence type="ECO:0000269" key="4">
    <source>
    </source>
</evidence>
<evidence type="ECO:0000269" key="5">
    <source>
    </source>
</evidence>
<evidence type="ECO:0000269" key="6">
    <source>
    </source>
</evidence>
<evidence type="ECO:0000269" key="7">
    <source>
    </source>
</evidence>
<evidence type="ECO:0000269" key="8">
    <source>
    </source>
</evidence>
<evidence type="ECO:0000303" key="9">
    <source>
    </source>
</evidence>
<evidence type="ECO:0000303" key="10">
    <source>
    </source>
</evidence>
<evidence type="ECO:0000305" key="11"/>
<evidence type="ECO:0000305" key="12">
    <source>
    </source>
</evidence>
<evidence type="ECO:0000312" key="13">
    <source>
        <dbReference type="SGD" id="S000000668"/>
    </source>
</evidence>
<evidence type="ECO:0007829" key="14">
    <source>
        <dbReference type="PDB" id="4WJU"/>
    </source>
</evidence>
<sequence>MSTLIPPPSKKQKKEAQLPREVAIIPKDLPNVSIKFQALDTGDNVGGALRVPGAISEKQLEELLNQLNGTSDDPVPYTFSCTIQGKKASDPVKTIDITDNLYSSLIKPGYNSTEDQITLLYTPRAVFKVKPVTRSSSAIAGHGSTILCSAFAPHTSSRMVTGAGDNTARIWDCDTQTPMHTLKGHYNWVLCVSWSPDGEVIATGSMDNTIRLWDPKSGQCLGDALRGHSKWITSLSWEPIHLVKPGSKPRLASSSKDGTIKIWDTVSRVCQYTMSGHTNSVSCVKWGGQGLLYSGSHDRTVRVWDINSQGRCINILKSHAHWVNHLSLSTDYALRIGAFDHTGKKPSTPEEAQKKALENYEKICKKNGNSEEMMVTASDDYTMFLWNPLKSTKPIARMTGHQKLVNHVAFSPDGRYIVSASFDNSIKLWDGRDGKFISTFRGHVASVYQVAWSSDCRLLVSCSKDTTLKVWDVRTRKLSVDLPGHKDEVYTVDWSVDGKRVCSGGKDKMVRLWTH</sequence>
<proteinExistence type="evidence at protein level"/>
<protein>
    <recommendedName>
        <fullName evidence="9">Ribosome assembly protein 4</fullName>
    </recommendedName>
    <alternativeName>
        <fullName evidence="1">Notchless protein homolog 1</fullName>
    </alternativeName>
    <alternativeName>
        <fullName evidence="10">Ribosome biogenesis factor RSA4</fullName>
    </alternativeName>
</protein>
<keyword id="KW-0002">3D-structure</keyword>
<keyword id="KW-0539">Nucleus</keyword>
<keyword id="KW-1185">Reference proteome</keyword>
<keyword id="KW-0677">Repeat</keyword>
<keyword id="KW-0690">Ribosome biogenesis</keyword>
<keyword id="KW-0853">WD repeat</keyword>
<dbReference type="EMBL" id="X59720">
    <property type="protein sequence ID" value="CAC42989.1"/>
    <property type="molecule type" value="Genomic_DNA"/>
</dbReference>
<dbReference type="EMBL" id="AY692666">
    <property type="protein sequence ID" value="AAT92685.1"/>
    <property type="molecule type" value="Genomic_DNA"/>
</dbReference>
<dbReference type="EMBL" id="BK006937">
    <property type="protein sequence ID" value="DAA07543.1"/>
    <property type="molecule type" value="Genomic_DNA"/>
</dbReference>
<dbReference type="PIR" id="S19487">
    <property type="entry name" value="S19487"/>
</dbReference>
<dbReference type="RefSeq" id="NP_009997.2">
    <property type="nucleotide sequence ID" value="NM_001178782.1"/>
</dbReference>
<dbReference type="PDB" id="3JCT">
    <property type="method" value="EM"/>
    <property type="resolution" value="3.08 A"/>
    <property type="chains" value="x=1-515"/>
</dbReference>
<dbReference type="PDB" id="4V7F">
    <property type="method" value="EM"/>
    <property type="resolution" value="8.70 A"/>
    <property type="chains" value="q=1-515"/>
</dbReference>
<dbReference type="PDB" id="4WJU">
    <property type="method" value="X-ray"/>
    <property type="resolution" value="2.80 A"/>
    <property type="chains" value="A/B=1-515"/>
</dbReference>
<dbReference type="PDB" id="4WJV">
    <property type="method" value="X-ray"/>
    <property type="resolution" value="3.20 A"/>
    <property type="chains" value="A/B/C/D=137-515"/>
</dbReference>
<dbReference type="PDB" id="5JCS">
    <property type="method" value="EM"/>
    <property type="resolution" value="9.50 A"/>
    <property type="chains" value="q=1-515"/>
</dbReference>
<dbReference type="PDB" id="6FT6">
    <property type="method" value="EM"/>
    <property type="resolution" value="3.90 A"/>
    <property type="chains" value="x=1-515"/>
</dbReference>
<dbReference type="PDB" id="6M62">
    <property type="method" value="EM"/>
    <property type="resolution" value="3.20 A"/>
    <property type="chains" value="x=1-515"/>
</dbReference>
<dbReference type="PDB" id="6YLF">
    <property type="method" value="EM"/>
    <property type="resolution" value="4.20 A"/>
    <property type="chains" value="xP1=1-515"/>
</dbReference>
<dbReference type="PDB" id="6YLG">
    <property type="method" value="EM"/>
    <property type="resolution" value="3.00 A"/>
    <property type="chains" value="x=1-515"/>
</dbReference>
<dbReference type="PDB" id="6YLH">
    <property type="method" value="EM"/>
    <property type="resolution" value="3.10 A"/>
    <property type="chains" value="x=1-515"/>
</dbReference>
<dbReference type="PDB" id="7BT6">
    <property type="method" value="EM"/>
    <property type="resolution" value="3.12 A"/>
    <property type="chains" value="x=1-515"/>
</dbReference>
<dbReference type="PDB" id="7BTB">
    <property type="method" value="EM"/>
    <property type="resolution" value="3.22 A"/>
    <property type="chains" value="x=1-515"/>
</dbReference>
<dbReference type="PDB" id="7OH3">
    <property type="method" value="EM"/>
    <property type="resolution" value="3.40 A"/>
    <property type="chains" value="x=1-515"/>
</dbReference>
<dbReference type="PDB" id="7OHQ">
    <property type="method" value="EM"/>
    <property type="resolution" value="3.10 A"/>
    <property type="chains" value="x=1-515"/>
</dbReference>
<dbReference type="PDB" id="7OHT">
    <property type="method" value="EM"/>
    <property type="resolution" value="4.70 A"/>
    <property type="chains" value="x=1-515"/>
</dbReference>
<dbReference type="PDB" id="7UG6">
    <property type="method" value="EM"/>
    <property type="resolution" value="2.90 A"/>
    <property type="chains" value="x=2-515"/>
</dbReference>
<dbReference type="PDB" id="7UOO">
    <property type="method" value="EM"/>
    <property type="resolution" value="2.34 A"/>
    <property type="chains" value="x=1-515"/>
</dbReference>
<dbReference type="PDB" id="7UQB">
    <property type="method" value="EM"/>
    <property type="resolution" value="2.43 A"/>
    <property type="chains" value="x=2-515"/>
</dbReference>
<dbReference type="PDB" id="7UQZ">
    <property type="method" value="EM"/>
    <property type="resolution" value="2.44 A"/>
    <property type="chains" value="x=1-515"/>
</dbReference>
<dbReference type="PDB" id="7V08">
    <property type="method" value="EM"/>
    <property type="resolution" value="2.36 A"/>
    <property type="chains" value="x=1-515"/>
</dbReference>
<dbReference type="PDBsum" id="3JCT"/>
<dbReference type="PDBsum" id="4V7F"/>
<dbReference type="PDBsum" id="4WJU"/>
<dbReference type="PDBsum" id="4WJV"/>
<dbReference type="PDBsum" id="5JCS"/>
<dbReference type="PDBsum" id="6FT6"/>
<dbReference type="PDBsum" id="6M62"/>
<dbReference type="PDBsum" id="6YLF"/>
<dbReference type="PDBsum" id="6YLG"/>
<dbReference type="PDBsum" id="6YLH"/>
<dbReference type="PDBsum" id="7BT6"/>
<dbReference type="PDBsum" id="7BTB"/>
<dbReference type="PDBsum" id="7OH3"/>
<dbReference type="PDBsum" id="7OHQ"/>
<dbReference type="PDBsum" id="7OHT"/>
<dbReference type="PDBsum" id="7UG6"/>
<dbReference type="PDBsum" id="7UOO"/>
<dbReference type="PDBsum" id="7UQB"/>
<dbReference type="PDBsum" id="7UQZ"/>
<dbReference type="PDBsum" id="7V08"/>
<dbReference type="EMDB" id="EMD-10837"/>
<dbReference type="EMDB" id="EMD-10838"/>
<dbReference type="EMDB" id="EMD-10839"/>
<dbReference type="EMDB" id="EMD-12892"/>
<dbReference type="EMDB" id="EMD-12905"/>
<dbReference type="EMDB" id="EMD-12908"/>
<dbReference type="EMDB" id="EMD-26485"/>
<dbReference type="EMDB" id="EMD-30108"/>
<dbReference type="EMDB" id="EMD-30170"/>
<dbReference type="EMDB" id="EMD-30174"/>
<dbReference type="EMDB" id="EMD-4302"/>
<dbReference type="SMR" id="P25382"/>
<dbReference type="BioGRID" id="31047">
    <property type="interactions" value="119"/>
</dbReference>
<dbReference type="DIP" id="DIP-5365N"/>
<dbReference type="FunCoup" id="P25382">
    <property type="interactions" value="905"/>
</dbReference>
<dbReference type="IntAct" id="P25382">
    <property type="interactions" value="40"/>
</dbReference>
<dbReference type="MINT" id="P25382"/>
<dbReference type="STRING" id="4932.YCR072C"/>
<dbReference type="iPTMnet" id="P25382"/>
<dbReference type="PaxDb" id="4932-YCR072C"/>
<dbReference type="PeptideAtlas" id="P25382"/>
<dbReference type="EnsemblFungi" id="YCR072C_mRNA">
    <property type="protein sequence ID" value="YCR072C"/>
    <property type="gene ID" value="YCR072C"/>
</dbReference>
<dbReference type="GeneID" id="850435"/>
<dbReference type="KEGG" id="sce:YCR072C"/>
<dbReference type="AGR" id="SGD:S000000668"/>
<dbReference type="SGD" id="S000000668">
    <property type="gene designation" value="RSA4"/>
</dbReference>
<dbReference type="VEuPathDB" id="FungiDB:YCR072C"/>
<dbReference type="eggNOG" id="KOG0271">
    <property type="taxonomic scope" value="Eukaryota"/>
</dbReference>
<dbReference type="GeneTree" id="ENSGT00940000157881"/>
<dbReference type="HOGENOM" id="CLU_000288_57_16_1"/>
<dbReference type="InParanoid" id="P25382"/>
<dbReference type="OMA" id="AWEPYHR"/>
<dbReference type="OrthoDB" id="10267436at2759"/>
<dbReference type="BioCyc" id="YEAST:G3O-29372-MONOMER"/>
<dbReference type="BioGRID-ORCS" id="850435">
    <property type="hits" value="5 hits in 10 CRISPR screens"/>
</dbReference>
<dbReference type="EvolutionaryTrace" id="P25382"/>
<dbReference type="PRO" id="PR:P25382"/>
<dbReference type="Proteomes" id="UP000002311">
    <property type="component" value="Chromosome III"/>
</dbReference>
<dbReference type="RNAct" id="P25382">
    <property type="molecule type" value="protein"/>
</dbReference>
<dbReference type="GO" id="GO:0005730">
    <property type="term" value="C:nucleolus"/>
    <property type="evidence" value="ECO:0000314"/>
    <property type="project" value="SGD"/>
</dbReference>
<dbReference type="GO" id="GO:0110136">
    <property type="term" value="P:protein-RNA complex remodeling"/>
    <property type="evidence" value="ECO:0000315"/>
    <property type="project" value="SGD"/>
</dbReference>
<dbReference type="GO" id="GO:0000027">
    <property type="term" value="P:ribosomal large subunit assembly"/>
    <property type="evidence" value="ECO:0000315"/>
    <property type="project" value="SGD"/>
</dbReference>
<dbReference type="CDD" id="cd00200">
    <property type="entry name" value="WD40"/>
    <property type="match status" value="1"/>
</dbReference>
<dbReference type="FunFam" id="2.130.10.10:FF:000092">
    <property type="entry name" value="notchless protein homolog"/>
    <property type="match status" value="1"/>
</dbReference>
<dbReference type="Gene3D" id="2.130.10.10">
    <property type="entry name" value="YVTN repeat-like/Quinoprotein amine dehydrogenase"/>
    <property type="match status" value="1"/>
</dbReference>
<dbReference type="InterPro" id="IPR020472">
    <property type="entry name" value="G-protein_beta_WD-40_rep"/>
</dbReference>
<dbReference type="InterPro" id="IPR012972">
    <property type="entry name" value="NLE"/>
</dbReference>
<dbReference type="InterPro" id="IPR015943">
    <property type="entry name" value="WD40/YVTN_repeat-like_dom_sf"/>
</dbReference>
<dbReference type="InterPro" id="IPR019775">
    <property type="entry name" value="WD40_repeat_CS"/>
</dbReference>
<dbReference type="InterPro" id="IPR036322">
    <property type="entry name" value="WD40_repeat_dom_sf"/>
</dbReference>
<dbReference type="InterPro" id="IPR001680">
    <property type="entry name" value="WD40_rpt"/>
</dbReference>
<dbReference type="PANTHER" id="PTHR19848:SF0">
    <property type="entry name" value="NOTCHLESS PROTEIN HOMOLOG 1"/>
    <property type="match status" value="1"/>
</dbReference>
<dbReference type="PANTHER" id="PTHR19848">
    <property type="entry name" value="WD40 REPEAT PROTEIN"/>
    <property type="match status" value="1"/>
</dbReference>
<dbReference type="Pfam" id="PF08154">
    <property type="entry name" value="NLE"/>
    <property type="match status" value="1"/>
</dbReference>
<dbReference type="Pfam" id="PF00400">
    <property type="entry name" value="WD40"/>
    <property type="match status" value="7"/>
</dbReference>
<dbReference type="PRINTS" id="PR00320">
    <property type="entry name" value="GPROTEINBRPT"/>
</dbReference>
<dbReference type="SMART" id="SM00320">
    <property type="entry name" value="WD40"/>
    <property type="match status" value="8"/>
</dbReference>
<dbReference type="SUPFAM" id="SSF50978">
    <property type="entry name" value="WD40 repeat-like"/>
    <property type="match status" value="1"/>
</dbReference>
<dbReference type="PROSITE" id="PS00678">
    <property type="entry name" value="WD_REPEATS_1"/>
    <property type="match status" value="5"/>
</dbReference>
<dbReference type="PROSITE" id="PS50082">
    <property type="entry name" value="WD_REPEATS_2"/>
    <property type="match status" value="7"/>
</dbReference>
<dbReference type="PROSITE" id="PS50294">
    <property type="entry name" value="WD_REPEATS_REGION"/>
    <property type="match status" value="1"/>
</dbReference>
<accession>P25382</accession>
<accession>D6VR74</accession>
<accession>Q8NKJ4</accession>